<dbReference type="EC" id="1.4.4.2" evidence="1"/>
<dbReference type="EMBL" id="CP000255">
    <property type="protein sequence ID" value="ABD21195.1"/>
    <property type="molecule type" value="Genomic_DNA"/>
</dbReference>
<dbReference type="RefSeq" id="WP_000019687.1">
    <property type="nucleotide sequence ID" value="NZ_CP027476.1"/>
</dbReference>
<dbReference type="SMR" id="Q2FGI6"/>
<dbReference type="KEGG" id="saa:SAUSA300_1497"/>
<dbReference type="HOGENOM" id="CLU_004620_0_2_9"/>
<dbReference type="Proteomes" id="UP000001939">
    <property type="component" value="Chromosome"/>
</dbReference>
<dbReference type="GO" id="GO:0004375">
    <property type="term" value="F:glycine dehydrogenase (decarboxylating) activity"/>
    <property type="evidence" value="ECO:0007669"/>
    <property type="project" value="UniProtKB-EC"/>
</dbReference>
<dbReference type="GO" id="GO:0019464">
    <property type="term" value="P:glycine decarboxylation via glycine cleavage system"/>
    <property type="evidence" value="ECO:0007669"/>
    <property type="project" value="UniProtKB-UniRule"/>
</dbReference>
<dbReference type="GO" id="GO:0009116">
    <property type="term" value="P:nucleoside metabolic process"/>
    <property type="evidence" value="ECO:0007669"/>
    <property type="project" value="InterPro"/>
</dbReference>
<dbReference type="CDD" id="cd00613">
    <property type="entry name" value="GDC-P"/>
    <property type="match status" value="1"/>
</dbReference>
<dbReference type="Gene3D" id="3.90.1150.10">
    <property type="entry name" value="Aspartate Aminotransferase, domain 1"/>
    <property type="match status" value="1"/>
</dbReference>
<dbReference type="Gene3D" id="3.40.640.10">
    <property type="entry name" value="Type I PLP-dependent aspartate aminotransferase-like (Major domain)"/>
    <property type="match status" value="1"/>
</dbReference>
<dbReference type="HAMAP" id="MF_00712">
    <property type="entry name" value="GcvPA"/>
    <property type="match status" value="1"/>
</dbReference>
<dbReference type="InterPro" id="IPR023010">
    <property type="entry name" value="GcvPA"/>
</dbReference>
<dbReference type="InterPro" id="IPR049315">
    <property type="entry name" value="GDC-P_N"/>
</dbReference>
<dbReference type="InterPro" id="IPR020581">
    <property type="entry name" value="GDC_P"/>
</dbReference>
<dbReference type="InterPro" id="IPR015424">
    <property type="entry name" value="PyrdxlP-dep_Trfase"/>
</dbReference>
<dbReference type="InterPro" id="IPR015421">
    <property type="entry name" value="PyrdxlP-dep_Trfase_major"/>
</dbReference>
<dbReference type="InterPro" id="IPR015422">
    <property type="entry name" value="PyrdxlP-dep_Trfase_small"/>
</dbReference>
<dbReference type="NCBIfam" id="NF001696">
    <property type="entry name" value="PRK00451.1"/>
    <property type="match status" value="1"/>
</dbReference>
<dbReference type="PANTHER" id="PTHR42806">
    <property type="entry name" value="GLYCINE CLEAVAGE SYSTEM P-PROTEIN"/>
    <property type="match status" value="1"/>
</dbReference>
<dbReference type="PANTHER" id="PTHR42806:SF1">
    <property type="entry name" value="GLYCINE DEHYDROGENASE (DECARBOXYLATING)"/>
    <property type="match status" value="1"/>
</dbReference>
<dbReference type="Pfam" id="PF02347">
    <property type="entry name" value="GDC-P"/>
    <property type="match status" value="1"/>
</dbReference>
<dbReference type="PIRSF" id="PIRSF006815">
    <property type="entry name" value="GcvPA"/>
    <property type="match status" value="1"/>
</dbReference>
<dbReference type="SUPFAM" id="SSF53383">
    <property type="entry name" value="PLP-dependent transferases"/>
    <property type="match status" value="1"/>
</dbReference>
<keyword id="KW-0560">Oxidoreductase</keyword>
<reference key="1">
    <citation type="journal article" date="2006" name="Lancet">
        <title>Complete genome sequence of USA300, an epidemic clone of community-acquired meticillin-resistant Staphylococcus aureus.</title>
        <authorList>
            <person name="Diep B.A."/>
            <person name="Gill S.R."/>
            <person name="Chang R.F."/>
            <person name="Phan T.H."/>
            <person name="Chen J.H."/>
            <person name="Davidson M.G."/>
            <person name="Lin F."/>
            <person name="Lin J."/>
            <person name="Carleton H.A."/>
            <person name="Mongodin E.F."/>
            <person name="Sensabaugh G.F."/>
            <person name="Perdreau-Remington F."/>
        </authorList>
    </citation>
    <scope>NUCLEOTIDE SEQUENCE [LARGE SCALE GENOMIC DNA]</scope>
    <source>
        <strain>USA300</strain>
    </source>
</reference>
<accession>Q2FGI6</accession>
<protein>
    <recommendedName>
        <fullName evidence="1">Probable glycine dehydrogenase (decarboxylating) subunit 1</fullName>
        <ecNumber evidence="1">1.4.4.2</ecNumber>
    </recommendedName>
    <alternativeName>
        <fullName evidence="1">Glycine cleavage system P-protein subunit 1</fullName>
    </alternativeName>
    <alternativeName>
        <fullName evidence="1">Glycine decarboxylase subunit 1</fullName>
    </alternativeName>
    <alternativeName>
        <fullName evidence="1">Glycine dehydrogenase (aminomethyl-transferring) subunit 1</fullName>
    </alternativeName>
</protein>
<feature type="chain" id="PRO_1000045680" description="Probable glycine dehydrogenase (decarboxylating) subunit 1">
    <location>
        <begin position="1"/>
        <end position="448"/>
    </location>
</feature>
<organism>
    <name type="scientific">Staphylococcus aureus (strain USA300)</name>
    <dbReference type="NCBI Taxonomy" id="367830"/>
    <lineage>
        <taxon>Bacteria</taxon>
        <taxon>Bacillati</taxon>
        <taxon>Bacillota</taxon>
        <taxon>Bacilli</taxon>
        <taxon>Bacillales</taxon>
        <taxon>Staphylococcaceae</taxon>
        <taxon>Staphylococcus</taxon>
    </lineage>
</organism>
<name>GCSPA_STAA3</name>
<comment type="function">
    <text evidence="1">The glycine cleavage system catalyzes the degradation of glycine. The P protein binds the alpha-amino group of glycine through its pyridoxal phosphate cofactor; CO(2) is released and the remaining methylamine moiety is then transferred to the lipoamide cofactor of the H protein.</text>
</comment>
<comment type="catalytic activity">
    <reaction evidence="1">
        <text>N(6)-[(R)-lipoyl]-L-lysyl-[glycine-cleavage complex H protein] + glycine + H(+) = N(6)-[(R)-S(8)-aminomethyldihydrolipoyl]-L-lysyl-[glycine-cleavage complex H protein] + CO2</text>
        <dbReference type="Rhea" id="RHEA:24304"/>
        <dbReference type="Rhea" id="RHEA-COMP:10494"/>
        <dbReference type="Rhea" id="RHEA-COMP:10495"/>
        <dbReference type="ChEBI" id="CHEBI:15378"/>
        <dbReference type="ChEBI" id="CHEBI:16526"/>
        <dbReference type="ChEBI" id="CHEBI:57305"/>
        <dbReference type="ChEBI" id="CHEBI:83099"/>
        <dbReference type="ChEBI" id="CHEBI:83143"/>
        <dbReference type="EC" id="1.4.4.2"/>
    </reaction>
</comment>
<comment type="subunit">
    <text evidence="1">The glycine cleavage system is composed of four proteins: P, T, L and H. In this organism, the P 'protein' is a heterodimer of two subunits.</text>
</comment>
<comment type="similarity">
    <text evidence="1">Belongs to the GcvP family. N-terminal subunit subfamily.</text>
</comment>
<sequence length="448" mass="49716">MSHRYIPLTEKDKQEMLQTIGAKSIGELFGDVPSDILLNRDLNIAEGEAETTLLRRLNRIASKNITKETHTSFLGAGVYDHYAPSVVDAMISRSEFYTAYTPYQPEISQGELQAIFEFQTLICELTDMDVANSSMYDGMTSFAEACILAFSQTKKNKIVVSKGLHYQALQVLHTYAKTRKEFEVVEIDLDGTVTDLKKLEAAVDDETAAVAVQYPNFYGSIEDLEKIHSFIEDKKALFIVYANPLALGLLTPPGSFGADIVVGDTQPFGIPAQFGGPHCGYFATTKKLMRKVPGRLVGQTQDDEGNRGFVLTLQAREQHIRRDKATSNICSNQALNALASSIAMSALGKQGIYDIAVQNIEHANYAKQQFIKKGFEVLDGTSFNEFVVKFDKPIQQVNEELVKYNIIGGFDLGVVSDDFKNHMLIAVTELRTKDEIDTFVEKAGELND</sequence>
<gene>
    <name evidence="1" type="primary">gcvPA</name>
    <name type="ordered locus">SAUSA300_1497</name>
</gene>
<proteinExistence type="inferred from homology"/>
<evidence type="ECO:0000255" key="1">
    <source>
        <dbReference type="HAMAP-Rule" id="MF_00712"/>
    </source>
</evidence>